<gene>
    <name evidence="1" type="primary">rps11</name>
    <name type="ordered locus">rrnAC0061</name>
</gene>
<evidence type="ECO:0000255" key="1">
    <source>
        <dbReference type="HAMAP-Rule" id="MF_01310"/>
    </source>
</evidence>
<evidence type="ECO:0000269" key="2">
    <source>
    </source>
</evidence>
<evidence type="ECO:0000305" key="3"/>
<dbReference type="EMBL" id="M87833">
    <property type="protein sequence ID" value="AAA73211.1"/>
    <property type="molecule type" value="Genomic_DNA"/>
</dbReference>
<dbReference type="EMBL" id="AY596297">
    <property type="protein sequence ID" value="AAV45142.1"/>
    <property type="molecule type" value="Genomic_DNA"/>
</dbReference>
<dbReference type="PIR" id="C44126">
    <property type="entry name" value="R3HSS1"/>
</dbReference>
<dbReference type="RefSeq" id="WP_004516802.1">
    <property type="nucleotide sequence ID" value="NZ_CP039138.1"/>
</dbReference>
<dbReference type="SMR" id="P10788"/>
<dbReference type="STRING" id="272569.rrnAC0061"/>
<dbReference type="PaxDb" id="272569-rrnAC0061"/>
<dbReference type="EnsemblBacteria" id="AAV45142">
    <property type="protein sequence ID" value="AAV45142"/>
    <property type="gene ID" value="rrnAC0061"/>
</dbReference>
<dbReference type="KEGG" id="hma:rrnAC0061"/>
<dbReference type="PATRIC" id="fig|272569.17.peg.870"/>
<dbReference type="eggNOG" id="arCOG04240">
    <property type="taxonomic scope" value="Archaea"/>
</dbReference>
<dbReference type="HOGENOM" id="CLU_072439_6_1_2"/>
<dbReference type="Proteomes" id="UP000001169">
    <property type="component" value="Chromosome I"/>
</dbReference>
<dbReference type="GO" id="GO:1990904">
    <property type="term" value="C:ribonucleoprotein complex"/>
    <property type="evidence" value="ECO:0007669"/>
    <property type="project" value="UniProtKB-KW"/>
</dbReference>
<dbReference type="GO" id="GO:0005840">
    <property type="term" value="C:ribosome"/>
    <property type="evidence" value="ECO:0007669"/>
    <property type="project" value="UniProtKB-KW"/>
</dbReference>
<dbReference type="GO" id="GO:0019843">
    <property type="term" value="F:rRNA binding"/>
    <property type="evidence" value="ECO:0007669"/>
    <property type="project" value="UniProtKB-UniRule"/>
</dbReference>
<dbReference type="GO" id="GO:0003735">
    <property type="term" value="F:structural constituent of ribosome"/>
    <property type="evidence" value="ECO:0007669"/>
    <property type="project" value="InterPro"/>
</dbReference>
<dbReference type="GO" id="GO:0006412">
    <property type="term" value="P:translation"/>
    <property type="evidence" value="ECO:0007669"/>
    <property type="project" value="UniProtKB-UniRule"/>
</dbReference>
<dbReference type="Gene3D" id="3.30.420.80">
    <property type="entry name" value="Ribosomal protein S11"/>
    <property type="match status" value="1"/>
</dbReference>
<dbReference type="HAMAP" id="MF_01310">
    <property type="entry name" value="Ribosomal_uS11"/>
    <property type="match status" value="1"/>
</dbReference>
<dbReference type="InterPro" id="IPR001971">
    <property type="entry name" value="Ribosomal_uS11"/>
</dbReference>
<dbReference type="InterPro" id="IPR019961">
    <property type="entry name" value="Ribosomal_uS11_archaeal"/>
</dbReference>
<dbReference type="InterPro" id="IPR018102">
    <property type="entry name" value="Ribosomal_uS11_CS"/>
</dbReference>
<dbReference type="InterPro" id="IPR036967">
    <property type="entry name" value="Ribosomal_uS11_sf"/>
</dbReference>
<dbReference type="NCBIfam" id="TIGR03628">
    <property type="entry name" value="arch_S11P"/>
    <property type="match status" value="1"/>
</dbReference>
<dbReference type="NCBIfam" id="NF007176">
    <property type="entry name" value="PRK09607.1"/>
    <property type="match status" value="1"/>
</dbReference>
<dbReference type="PANTHER" id="PTHR11759">
    <property type="entry name" value="40S RIBOSOMAL PROTEIN S14/30S RIBOSOMAL PROTEIN S11"/>
    <property type="match status" value="1"/>
</dbReference>
<dbReference type="Pfam" id="PF00411">
    <property type="entry name" value="Ribosomal_S11"/>
    <property type="match status" value="1"/>
</dbReference>
<dbReference type="PIRSF" id="PIRSF002131">
    <property type="entry name" value="Ribosomal_S11"/>
    <property type="match status" value="1"/>
</dbReference>
<dbReference type="SUPFAM" id="SSF53137">
    <property type="entry name" value="Translational machinery components"/>
    <property type="match status" value="1"/>
</dbReference>
<dbReference type="PROSITE" id="PS00054">
    <property type="entry name" value="RIBOSOMAL_S11"/>
    <property type="match status" value="1"/>
</dbReference>
<accession>P10788</accession>
<accession>Q5V5R0</accession>
<organism>
    <name type="scientific">Haloarcula marismortui (strain ATCC 43049 / DSM 3752 / JCM 8966 / VKM B-1809)</name>
    <name type="common">Halobacterium marismortui</name>
    <dbReference type="NCBI Taxonomy" id="272569"/>
    <lineage>
        <taxon>Archaea</taxon>
        <taxon>Methanobacteriati</taxon>
        <taxon>Methanobacteriota</taxon>
        <taxon>Stenosarchaea group</taxon>
        <taxon>Halobacteria</taxon>
        <taxon>Halobacteriales</taxon>
        <taxon>Haloarculaceae</taxon>
        <taxon>Haloarcula</taxon>
    </lineage>
</organism>
<proteinExistence type="evidence at protein level"/>
<comment type="function">
    <text evidence="1">Located on the platform of the 30S subunit.</text>
</comment>
<comment type="subunit">
    <text evidence="1">Part of the 30S ribosomal subunit.</text>
</comment>
<comment type="similarity">
    <text evidence="1">Belongs to the universal ribosomal protein uS11 family.</text>
</comment>
<keyword id="KW-0903">Direct protein sequencing</keyword>
<keyword id="KW-1185">Reference proteome</keyword>
<keyword id="KW-0687">Ribonucleoprotein</keyword>
<keyword id="KW-0689">Ribosomal protein</keyword>
<keyword id="KW-0694">RNA-binding</keyword>
<keyword id="KW-0699">rRNA-binding</keyword>
<feature type="initiator methionine" description="Removed" evidence="2">
    <location>
        <position position="1"/>
    </location>
</feature>
<feature type="chain" id="PRO_0000123268" description="Small ribosomal subunit protein uS11">
    <location>
        <begin position="2"/>
        <end position="129"/>
    </location>
</feature>
<feature type="sequence conflict" description="In Ref. 3; AA sequence." evidence="3" ref="3">
    <original>W</original>
    <variation>N</variation>
    <location>
        <position position="9"/>
    </location>
</feature>
<feature type="sequence conflict" description="In Ref. 3; AA sequence." evidence="3" ref="3">
    <original>E</original>
    <variation>EQ</variation>
    <location>
        <position position="32"/>
    </location>
</feature>
<feature type="sequence conflict" description="In Ref. 3; AA sequence." evidence="3" ref="3">
    <original>D</original>
    <variation>N</variation>
    <location>
        <position position="119"/>
    </location>
</feature>
<name>RS11_HALMA</name>
<reference key="1">
    <citation type="journal article" date="1992" name="J. Biol. Chem.">
        <title>The alpha-operon equivalent genome region in the extreme halophilic archaebacterium Haloarcula (Halobacterium) marismortui.</title>
        <authorList>
            <person name="Scholzen T."/>
            <person name="Arndt E."/>
        </authorList>
    </citation>
    <scope>NUCLEOTIDE SEQUENCE [GENOMIC DNA]</scope>
</reference>
<reference key="2">
    <citation type="journal article" date="2004" name="Genome Res.">
        <title>Genome sequence of Haloarcula marismortui: a halophilic archaeon from the Dead Sea.</title>
        <authorList>
            <person name="Baliga N.S."/>
            <person name="Bonneau R."/>
            <person name="Facciotti M.T."/>
            <person name="Pan M."/>
            <person name="Glusman G."/>
            <person name="Deutsch E.W."/>
            <person name="Shannon P."/>
            <person name="Chiu Y."/>
            <person name="Weng R.S."/>
            <person name="Gan R.R."/>
            <person name="Hung P."/>
            <person name="Date S.V."/>
            <person name="Marcotte E."/>
            <person name="Hood L."/>
            <person name="Ng W.V."/>
        </authorList>
    </citation>
    <scope>NUCLEOTIDE SEQUENCE [LARGE SCALE GENOMIC DNA]</scope>
    <source>
        <strain>ATCC 43049 / DSM 3752 / JCM 8966 / VKM B-1809</strain>
    </source>
</reference>
<reference key="3">
    <citation type="journal article" date="1988" name="FEBS Lett.">
        <title>Amino acid sequences of ribosomal proteins S11 from Bacillus stearothermophilus and S19 from Halobacterium marismortui. Comparison of the ribosomal protein S11 family.</title>
        <authorList>
            <person name="Kimura M."/>
            <person name="Kimura J."/>
            <person name="Hatakeyama T."/>
        </authorList>
    </citation>
    <scope>PROTEIN SEQUENCE OF 2-129</scope>
</reference>
<protein>
    <recommendedName>
        <fullName evidence="1">Small ribosomal subunit protein uS11</fullName>
    </recommendedName>
    <alternativeName>
        <fullName evidence="3">30S ribosomal protein S11</fullName>
    </alternativeName>
    <alternativeName>
        <fullName>HS19</fullName>
    </alternativeName>
    <alternativeName>
        <fullName>HmaS11</fullName>
    </alternativeName>
</protein>
<sequence length="129" mass="13495">MSEETEDIWGIAHVHASFNNTIITITDQTGAETLAKSSGGTVVKQNRDEASPYAAMQMAEVVAEKALDRGVEGVDVRVRGPGGNLQTSPGPGAQATIRALARAGLEIGRIEDVTPTPHDGTRAPKNSGF</sequence>